<gene>
    <name type="primary">TNFRSF10B</name>
    <name type="synonym">DR5</name>
    <name type="synonym">KILLER</name>
    <name type="synonym">TRAILR2</name>
    <name type="synonym">TRICK2</name>
    <name type="synonym">ZTNFR9</name>
    <name type="ORF">UNQ160/PRO186</name>
</gene>
<accession>O14763</accession>
<accession>O14720</accession>
<accession>O15508</accession>
<accession>O15517</accession>
<accession>O15531</accession>
<accession>Q6UXM8</accession>
<accession>Q7Z360</accession>
<accession>Q9BVE0</accession>
<organism>
    <name type="scientific">Homo sapiens</name>
    <name type="common">Human</name>
    <dbReference type="NCBI Taxonomy" id="9606"/>
    <lineage>
        <taxon>Eukaryota</taxon>
        <taxon>Metazoa</taxon>
        <taxon>Chordata</taxon>
        <taxon>Craniata</taxon>
        <taxon>Vertebrata</taxon>
        <taxon>Euteleostomi</taxon>
        <taxon>Mammalia</taxon>
        <taxon>Eutheria</taxon>
        <taxon>Euarchontoglires</taxon>
        <taxon>Primates</taxon>
        <taxon>Haplorrhini</taxon>
        <taxon>Catarrhini</taxon>
        <taxon>Hominidae</taxon>
        <taxon>Homo</taxon>
    </lineage>
</organism>
<reference key="1">
    <citation type="journal article" date="1997" name="Curr. Biol.">
        <title>TRICK2, a new alternatively spliced receptor that transduces the cytotoxic signal from TRAIL.</title>
        <authorList>
            <person name="Screaton G.R."/>
            <person name="Mongkolsapaya J."/>
            <person name="Xu X.-N."/>
            <person name="Cowper A.E."/>
            <person name="McMichael A.J."/>
            <person name="Bell J.I."/>
        </authorList>
    </citation>
    <scope>NUCLEOTIDE SEQUENCE [MRNA] (ISOFORMS LONG AND SHORT)</scope>
    <scope>ALTERNATIVE SPLICING</scope>
    <scope>VARIANTS LEU-32; VAL-67 AND ALA-191</scope>
</reference>
<reference key="2">
    <citation type="journal article" date="1997" name="EMBO J.">
        <title>TRAIL-R2: a novel apoptosis-mediating receptor for TRAIL.</title>
        <authorList>
            <person name="Walczak H."/>
            <person name="Degli-Esposti M.A."/>
            <person name="Johnson R.S."/>
            <person name="Smolak P.J."/>
            <person name="Waugh J.Y."/>
            <person name="Boiani N."/>
            <person name="Timour M.S."/>
            <person name="Gerhart M.J."/>
            <person name="Schooley K.A."/>
            <person name="Smith C.A."/>
            <person name="Goodwin R.G."/>
            <person name="Rauch C.T."/>
        </authorList>
    </citation>
    <scope>NUCLEOTIDE SEQUENCE [MRNA] (ISOFORM LONG)</scope>
    <scope>PROTEIN SEQUENCE OF N-TERMINUS</scope>
    <scope>VARIANT ALA-191</scope>
    <source>
        <tissue>Foreskin fibroblast</tissue>
    </source>
</reference>
<reference key="3">
    <citation type="journal article" date="1997" name="FEBS Lett.">
        <title>Characterization of two receptors for TRAIL.</title>
        <authorList>
            <person name="Schneider P."/>
            <person name="Bodmer J.-L."/>
            <person name="Thome M."/>
            <person name="Hofmann K."/>
            <person name="Holler N."/>
            <person name="Tschopp J."/>
        </authorList>
    </citation>
    <scope>NUCLEOTIDE SEQUENCE [MRNA] (ISOFORM LONG)</scope>
    <scope>CHARACTERIZATION</scope>
    <scope>VARIANTS LEU-32; VAL-67 AND ALA-191</scope>
    <source>
        <tissue>Liver</tissue>
        <tissue>Spleen</tissue>
    </source>
</reference>
<reference key="4">
    <citation type="journal article" date="1997" name="Immunity">
        <title>Death receptor 5, a new member of the TNFR family, and DR4 induce FADD-dependent apoptosis and activate the NF-kappaB pathway.</title>
        <authorList>
            <person name="Chaudhary P.M."/>
            <person name="Eby M."/>
            <person name="Jasmin A."/>
            <person name="Bookwalter A."/>
            <person name="Murray J."/>
            <person name="Hood L."/>
        </authorList>
    </citation>
    <scope>NUCLEOTIDE SEQUENCE [MRNA] (ISOFORM SHORT)</scope>
    <scope>VARIANTS LEU-32 AND VAL-67</scope>
</reference>
<reference key="5">
    <citation type="journal article" date="1997" name="J. Biol. Chem.">
        <title>Identification and molecular cloning of two novel receptors for the cytotoxic ligand TRAIL.</title>
        <authorList>
            <person name="MacFarlane M."/>
            <person name="Ahmad M."/>
            <person name="Srinivasula S.M."/>
            <person name="Fernandes-Alnemri T."/>
            <person name="Cohen G.M."/>
            <person name="Alnemri E.S."/>
        </authorList>
    </citation>
    <scope>NUCLEOTIDE SEQUENCE [MRNA] (ISOFORM SHORT)</scope>
    <scope>VARIANTS LEU-32 AND VAL-67</scope>
</reference>
<reference key="6">
    <citation type="journal article" date="1997" name="Nat. Genet.">
        <title>KILLER/DR5 is a DNA damage-inducible p53-regulated death receptor gene.</title>
        <authorList>
            <person name="Wu G.S."/>
            <person name="Burns T.F."/>
            <person name="McDonald E.R. III"/>
            <person name="Jiang W."/>
            <person name="Meng R."/>
            <person name="Krantz I.D."/>
            <person name="Kao G."/>
            <person name="Gan D.D."/>
            <person name="Zhou J.Y."/>
            <person name="Muschel R."/>
            <person name="Hamilton S.R."/>
            <person name="Spinner N.B."/>
            <person name="Markowitz S."/>
            <person name="Wu G."/>
            <person name="el-Deiry W.S."/>
        </authorList>
    </citation>
    <scope>NUCLEOTIDE SEQUENCE [MRNA] (ISOFORM SHORT)</scope>
    <source>
        <tissue>Ovary</tissue>
    </source>
</reference>
<reference key="7">
    <citation type="journal article" date="1997" name="Science">
        <title>An antagonist decoy receptor and a death domain-containing receptor for TRAIL.</title>
        <authorList>
            <person name="Pan G."/>
            <person name="Ni J."/>
            <person name="Wei Y.-F."/>
            <person name="Yu G.-L."/>
            <person name="Gentz R."/>
            <person name="Dixit V.M."/>
        </authorList>
    </citation>
    <scope>NUCLEOTIDE SEQUENCE [MRNA] (ISOFORM SHORT)</scope>
</reference>
<reference key="8">
    <citation type="journal article" date="1997" name="Science">
        <title>Control of TRAIL-induced apoptosis by a family of signaling and decoy receptors.</title>
        <authorList>
            <person name="Sheridan J.P."/>
            <person name="Marsters S.A."/>
            <person name="Pitti R.M."/>
            <person name="Gurney A."/>
            <person name="Skubatch M."/>
            <person name="Baldwin D.T."/>
            <person name="Ramakrishnan L."/>
            <person name="Gray C.L."/>
            <person name="Baker K."/>
            <person name="Wood W.I."/>
            <person name="Goddard A.D."/>
            <person name="Godowski P.J."/>
            <person name="Ashkenazi A."/>
        </authorList>
    </citation>
    <scope>NUCLEOTIDE SEQUENCE [MRNA] (ISOFORM SHORT)</scope>
    <scope>VARIANT LEU-32</scope>
</reference>
<reference key="9">
    <citation type="journal article" date="1998" name="Cancer Lett.">
        <title>Genomic organization and mutation analyses of the DR5/TRAIL receptor 2 gene in colorectal carcinomas.</title>
        <authorList>
            <person name="Arai T."/>
            <person name="Akiyama Y."/>
            <person name="Okabe S."/>
            <person name="Saito K."/>
            <person name="Iwai T."/>
            <person name="Yuasa Y."/>
        </authorList>
    </citation>
    <scope>NUCLEOTIDE SEQUENCE [GENOMIC DNA]</scope>
    <scope>ALTERNATIVE SPLICING</scope>
    <scope>VARIANTS LEU-32; VAL-67 AND ALA-191</scope>
</reference>
<reference key="10">
    <citation type="submission" date="1999-05" db="EMBL/GenBank/DDBJ databases">
        <authorList>
            <person name="Cao X."/>
            <person name="Zhang W."/>
            <person name="Wan T."/>
        </authorList>
    </citation>
    <scope>NUCLEOTIDE SEQUENCE [MRNA] (ISOFORM SHORT)</scope>
</reference>
<reference key="11">
    <citation type="submission" date="1999-10" db="EMBL/GenBank/DDBJ databases">
        <title>Homo sapiens homolog of tumor necrosis factor receptor.</title>
        <authorList>
            <person name="Farrah T."/>
            <person name="Vu T."/>
            <person name="Gilbert T."/>
            <person name="Gross J."/>
            <person name="O'Hara P."/>
        </authorList>
    </citation>
    <scope>NUCLEOTIDE SEQUENCE [MRNA] (ISOFORM SHORT)</scope>
    <scope>VARIANTS LEU-32 AND VAL-67</scope>
</reference>
<reference key="12">
    <citation type="journal article" date="2003" name="Genome Res.">
        <title>The secreted protein discovery initiative (SPDI), a large-scale effort to identify novel human secreted and transmembrane proteins: a bioinformatics assessment.</title>
        <authorList>
            <person name="Clark H.F."/>
            <person name="Gurney A.L."/>
            <person name="Abaya E."/>
            <person name="Baker K."/>
            <person name="Baldwin D.T."/>
            <person name="Brush J."/>
            <person name="Chen J."/>
            <person name="Chow B."/>
            <person name="Chui C."/>
            <person name="Crowley C."/>
            <person name="Currell B."/>
            <person name="Deuel B."/>
            <person name="Dowd P."/>
            <person name="Eaton D."/>
            <person name="Foster J.S."/>
            <person name="Grimaldi C."/>
            <person name="Gu Q."/>
            <person name="Hass P.E."/>
            <person name="Heldens S."/>
            <person name="Huang A."/>
            <person name="Kim H.S."/>
            <person name="Klimowski L."/>
            <person name="Jin Y."/>
            <person name="Johnson S."/>
            <person name="Lee J."/>
            <person name="Lewis L."/>
            <person name="Liao D."/>
            <person name="Mark M.R."/>
            <person name="Robbie E."/>
            <person name="Sanchez C."/>
            <person name="Schoenfeld J."/>
            <person name="Seshagiri S."/>
            <person name="Simmons L."/>
            <person name="Singh J."/>
            <person name="Smith V."/>
            <person name="Stinson J."/>
            <person name="Vagts A."/>
            <person name="Vandlen R.L."/>
            <person name="Watanabe C."/>
            <person name="Wieand D."/>
            <person name="Woods K."/>
            <person name="Xie M.-H."/>
            <person name="Yansura D.G."/>
            <person name="Yi S."/>
            <person name="Yu G."/>
            <person name="Yuan J."/>
            <person name="Zhang M."/>
            <person name="Zhang Z."/>
            <person name="Goddard A.D."/>
            <person name="Wood W.I."/>
            <person name="Godowski P.J."/>
            <person name="Gray A.M."/>
        </authorList>
    </citation>
    <scope>NUCLEOTIDE SEQUENCE [LARGE SCALE MRNA] (ISOFORM SHORT)</scope>
    <scope>VARIANT LEU-32</scope>
</reference>
<reference key="13">
    <citation type="journal article" date="2007" name="BMC Genomics">
        <title>The full-ORF clone resource of the German cDNA consortium.</title>
        <authorList>
            <person name="Bechtel S."/>
            <person name="Rosenfelder H."/>
            <person name="Duda A."/>
            <person name="Schmidt C.P."/>
            <person name="Ernst U."/>
            <person name="Wellenreuther R."/>
            <person name="Mehrle A."/>
            <person name="Schuster C."/>
            <person name="Bahr A."/>
            <person name="Bloecker H."/>
            <person name="Heubner D."/>
            <person name="Hoerlein A."/>
            <person name="Michel G."/>
            <person name="Wedler H."/>
            <person name="Koehrer K."/>
            <person name="Ottenwaelder B."/>
            <person name="Poustka A."/>
            <person name="Wiemann S."/>
            <person name="Schupp I."/>
        </authorList>
    </citation>
    <scope>NUCLEOTIDE SEQUENCE [LARGE SCALE MRNA] (ISOFORM 3)</scope>
    <scope>VARIANT LEU-32</scope>
    <source>
        <tissue>Colon endothelium</tissue>
    </source>
</reference>
<reference key="14">
    <citation type="journal article" date="2006" name="Nature">
        <title>DNA sequence and analysis of human chromosome 8.</title>
        <authorList>
            <person name="Nusbaum C."/>
            <person name="Mikkelsen T.S."/>
            <person name="Zody M.C."/>
            <person name="Asakawa S."/>
            <person name="Taudien S."/>
            <person name="Garber M."/>
            <person name="Kodira C.D."/>
            <person name="Schueler M.G."/>
            <person name="Shimizu A."/>
            <person name="Whittaker C.A."/>
            <person name="Chang J.L."/>
            <person name="Cuomo C.A."/>
            <person name="Dewar K."/>
            <person name="FitzGerald M.G."/>
            <person name="Yang X."/>
            <person name="Allen N.R."/>
            <person name="Anderson S."/>
            <person name="Asakawa T."/>
            <person name="Blechschmidt K."/>
            <person name="Bloom T."/>
            <person name="Borowsky M.L."/>
            <person name="Butler J."/>
            <person name="Cook A."/>
            <person name="Corum B."/>
            <person name="DeArellano K."/>
            <person name="DeCaprio D."/>
            <person name="Dooley K.T."/>
            <person name="Dorris L. III"/>
            <person name="Engels R."/>
            <person name="Gloeckner G."/>
            <person name="Hafez N."/>
            <person name="Hagopian D.S."/>
            <person name="Hall J.L."/>
            <person name="Ishikawa S.K."/>
            <person name="Jaffe D.B."/>
            <person name="Kamat A."/>
            <person name="Kudoh J."/>
            <person name="Lehmann R."/>
            <person name="Lokitsang T."/>
            <person name="Macdonald P."/>
            <person name="Major J.E."/>
            <person name="Matthews C.D."/>
            <person name="Mauceli E."/>
            <person name="Menzel U."/>
            <person name="Mihalev A.H."/>
            <person name="Minoshima S."/>
            <person name="Murayama Y."/>
            <person name="Naylor J.W."/>
            <person name="Nicol R."/>
            <person name="Nguyen C."/>
            <person name="O'Leary S.B."/>
            <person name="O'Neill K."/>
            <person name="Parker S.C.J."/>
            <person name="Polley A."/>
            <person name="Raymond C.K."/>
            <person name="Reichwald K."/>
            <person name="Rodriguez J."/>
            <person name="Sasaki T."/>
            <person name="Schilhabel M."/>
            <person name="Siddiqui R."/>
            <person name="Smith C.L."/>
            <person name="Sneddon T.P."/>
            <person name="Talamas J.A."/>
            <person name="Tenzin P."/>
            <person name="Topham K."/>
            <person name="Venkataraman V."/>
            <person name="Wen G."/>
            <person name="Yamazaki S."/>
            <person name="Young S.K."/>
            <person name="Zeng Q."/>
            <person name="Zimmer A.R."/>
            <person name="Rosenthal A."/>
            <person name="Birren B.W."/>
            <person name="Platzer M."/>
            <person name="Shimizu N."/>
            <person name="Lander E.S."/>
        </authorList>
    </citation>
    <scope>NUCLEOTIDE SEQUENCE [LARGE SCALE GENOMIC DNA]</scope>
</reference>
<reference key="15">
    <citation type="journal article" date="2004" name="Genome Res.">
        <title>The status, quality, and expansion of the NIH full-length cDNA project: the Mammalian Gene Collection (MGC).</title>
        <authorList>
            <consortium name="The MGC Project Team"/>
        </authorList>
    </citation>
    <scope>NUCLEOTIDE SEQUENCE [LARGE SCALE MRNA] (ISOFORM LONG)</scope>
    <scope>VARIANTS LEU-32 AND ALA-191</scope>
    <source>
        <tissue>Cervix</tissue>
    </source>
</reference>
<reference key="16">
    <citation type="journal article" date="2004" name="Genome Biol.">
        <title>An unappreciated role for RNA surveillance.</title>
        <authorList>
            <person name="Hillman R.T."/>
            <person name="Green R.E."/>
            <person name="Brenner S.E."/>
        </authorList>
    </citation>
    <scope>SPLICE ISOFORM(S) THAT ARE POTENTIAL NMD TARGET(S)</scope>
</reference>
<reference key="17">
    <citation type="journal article" date="2004" name="J. Biol. Chem.">
        <title>CHOP is involved in endoplasmic reticulum stress-induced apoptosis by enhancing DR5 expression in human carcinoma cells.</title>
        <authorList>
            <person name="Yamaguchi H."/>
            <person name="Wang H.G."/>
        </authorList>
    </citation>
    <scope>FUNCTION</scope>
    <scope>INDUCTION</scope>
</reference>
<reference key="18">
    <citation type="journal article" date="2008" name="Cell Death Differ.">
        <title>Identification of an antiapoptotic protein complex at death receptors.</title>
        <authorList>
            <person name="Sun M."/>
            <person name="Song L."/>
            <person name="Li Y."/>
            <person name="Zhou T."/>
            <person name="Jope R.S."/>
        </authorList>
    </citation>
    <scope>INTERACTION WITH DDX3X; GSK3B AND BIRC2</scope>
</reference>
<reference key="19">
    <citation type="journal article" date="2013" name="Cell Host Microbe">
        <title>Human cytomegalovirus glycoprotein UL141 targets the TRAIL death receptors to thwart host innate antiviral defenses.</title>
        <authorList>
            <person name="Smith W."/>
            <person name="Tomasec P."/>
            <person name="Aicheler R."/>
            <person name="Loewendorf A."/>
            <person name="Nemcovicova I."/>
            <person name="Wang E.C."/>
            <person name="Stanton R.J."/>
            <person name="Macauley M."/>
            <person name="Norris P."/>
            <person name="Willen L."/>
            <person name="Ruckova E."/>
            <person name="Nomoto A."/>
            <person name="Schneider P."/>
            <person name="Hahn G."/>
            <person name="Zajonc D.M."/>
            <person name="Ware C.F."/>
            <person name="Wilkinson G.W."/>
            <person name="Benedict C.A."/>
        </authorList>
    </citation>
    <scope>INTERACTION WITH HUMAN CYTOMEGALOVIRUS PROTEIN UL141</scope>
</reference>
<reference key="20">
    <citation type="journal article" date="2019" name="Mol. Cell. Proteomics">
        <title>Salmonella effectors SseK1 and SseK3 target death domain proteins in the TNF and TRAIL signaling pathways.</title>
        <authorList>
            <person name="Newson J.P.M."/>
            <person name="Scott N.E."/>
            <person name="Yeuk Wah Chung I."/>
            <person name="Wong Fok Lung T."/>
            <person name="Giogha C."/>
            <person name="Gan J."/>
            <person name="Wang N."/>
            <person name="Strugnell R.A."/>
            <person name="Brown N.F."/>
            <person name="Cygler M."/>
            <person name="Pearson J.S."/>
            <person name="Hartland E.L."/>
        </authorList>
    </citation>
    <scope>GLYCOSYLATION (MICROBIAL INFECTION)</scope>
</reference>
<reference key="21">
    <citation type="journal article" date="1999" name="Mol. Cell">
        <title>Triggering cell death: the crystal structure of Apo2L/TRAIL in a complex with death receptor 5.</title>
        <authorList>
            <person name="Hymowitz S.G."/>
            <person name="Christinger H.W."/>
            <person name="Fuh G."/>
            <person name="Ultsch M."/>
            <person name="O'Connell M."/>
            <person name="Kelley R.F."/>
            <person name="Ashkenazi A."/>
            <person name="de Vos A.M."/>
        </authorList>
    </citation>
    <scope>X-RAY CRYSTALLOGRAPHY (2.4 ANGSTROMS) OF 54-183 IN COMPLEX WITH TNFSF10</scope>
    <scope>DISULFIDE BOND</scope>
    <scope>SUBUNIT</scope>
</reference>
<reference key="22">
    <citation type="journal article" date="1999" name="Nat. Struct. Biol.">
        <title>Structure of the TRAIL-DR5 complex reveals mechanisms conferring specificity in apoptotic initiation.</title>
        <authorList>
            <person name="Mongkolsapaya J."/>
            <person name="Grimes J.M."/>
            <person name="Chen N."/>
            <person name="Xu X.-N."/>
            <person name="Stuart D.I."/>
            <person name="Jones E.Y."/>
            <person name="Screaton G.R."/>
        </authorList>
    </citation>
    <scope>X-RAY CRYSTALLOGRAPHY (2.2 ANGSTROMS) OF 69-184 IN COMPLEX WITH TNFSF10</scope>
    <scope>DISULFIDE BOND</scope>
</reference>
<reference key="23">
    <citation type="journal article" date="2013" name="PLoS Pathog.">
        <title>Structure of human cytomegalovirus UL141 binding to TRAIL-R2 reveals novel, non-canonical death receptor interactions.</title>
        <authorList>
            <person name="Nemcovicova I."/>
            <person name="Benedict C.A."/>
            <person name="Zajonc D.M."/>
        </authorList>
    </citation>
    <scope>X-RAY CRYSTALLOGRAPHY (2.10 ANGSTROMS) OF 58-184</scope>
    <scope>INTERACTION WITH HUMAN CYTOMEGALOVIRUS PROTEIN UL141</scope>
    <scope>DISULFIDE BOND</scope>
</reference>
<proteinExistence type="evidence at protein level"/>
<evidence type="ECO:0000255" key="1"/>
<evidence type="ECO:0000255" key="2">
    <source>
        <dbReference type="PROSITE-ProRule" id="PRU00064"/>
    </source>
</evidence>
<evidence type="ECO:0000256" key="3">
    <source>
        <dbReference type="SAM" id="MobiDB-lite"/>
    </source>
</evidence>
<evidence type="ECO:0000269" key="4">
    <source>
    </source>
</evidence>
<evidence type="ECO:0000269" key="5">
    <source>
    </source>
</evidence>
<evidence type="ECO:0000269" key="6">
    <source>
    </source>
</evidence>
<evidence type="ECO:0000269" key="7">
    <source>
    </source>
</evidence>
<evidence type="ECO:0000269" key="8">
    <source>
    </source>
</evidence>
<evidence type="ECO:0000269" key="9">
    <source>
    </source>
</evidence>
<evidence type="ECO:0000269" key="10">
    <source>
    </source>
</evidence>
<evidence type="ECO:0000269" key="11">
    <source>
    </source>
</evidence>
<evidence type="ECO:0000269" key="12">
    <source>
    </source>
</evidence>
<evidence type="ECO:0000269" key="13">
    <source>
    </source>
</evidence>
<evidence type="ECO:0000269" key="14">
    <source>
    </source>
</evidence>
<evidence type="ECO:0000269" key="15">
    <source>
    </source>
</evidence>
<evidence type="ECO:0000269" key="16">
    <source>
    </source>
</evidence>
<evidence type="ECO:0000269" key="17">
    <source>
    </source>
</evidence>
<evidence type="ECO:0000269" key="18">
    <source>
    </source>
</evidence>
<evidence type="ECO:0000269" key="19">
    <source>
    </source>
</evidence>
<evidence type="ECO:0000269" key="20">
    <source>
    </source>
</evidence>
<evidence type="ECO:0000269" key="21">
    <source ref="11"/>
</evidence>
<evidence type="ECO:0000303" key="22">
    <source>
    </source>
</evidence>
<evidence type="ECO:0000303" key="23">
    <source>
    </source>
</evidence>
<evidence type="ECO:0000303" key="24">
    <source>
    </source>
</evidence>
<evidence type="ECO:0000303" key="25">
    <source>
    </source>
</evidence>
<evidence type="ECO:0000303" key="26">
    <source>
    </source>
</evidence>
<evidence type="ECO:0000303" key="27">
    <source>
    </source>
</evidence>
<evidence type="ECO:0000303" key="28">
    <source>
    </source>
</evidence>
<evidence type="ECO:0000303" key="29">
    <source>
    </source>
</evidence>
<evidence type="ECO:0000303" key="30">
    <source ref="10"/>
</evidence>
<evidence type="ECO:0000303" key="31">
    <source ref="11"/>
</evidence>
<evidence type="ECO:0000305" key="32"/>
<evidence type="ECO:0007744" key="33">
    <source>
        <dbReference type="PDB" id="1D0G"/>
    </source>
</evidence>
<evidence type="ECO:0007744" key="34">
    <source>
        <dbReference type="PDB" id="1D4V"/>
    </source>
</evidence>
<evidence type="ECO:0007744" key="35">
    <source>
        <dbReference type="PDB" id="4I9X"/>
    </source>
</evidence>
<evidence type="ECO:0007744" key="36">
    <source>
        <dbReference type="PDB" id="4N90"/>
    </source>
</evidence>
<evidence type="ECO:0007829" key="37">
    <source>
        <dbReference type="PDB" id="1D4V"/>
    </source>
</evidence>
<evidence type="ECO:0007829" key="38">
    <source>
        <dbReference type="PDB" id="1DU3"/>
    </source>
</evidence>
<evidence type="ECO:0007829" key="39">
    <source>
        <dbReference type="PDB" id="3X3F"/>
    </source>
</evidence>
<evidence type="ECO:0007829" key="40">
    <source>
        <dbReference type="PDB" id="4I9X"/>
    </source>
</evidence>
<evidence type="ECO:0007829" key="41">
    <source>
        <dbReference type="PDB" id="6NHW"/>
    </source>
</evidence>
<evidence type="ECO:0007829" key="42">
    <source>
        <dbReference type="PDB" id="6NHY"/>
    </source>
</evidence>
<evidence type="ECO:0007829" key="43">
    <source>
        <dbReference type="PDB" id="8DPX"/>
    </source>
</evidence>
<keyword id="KW-0002">3D-structure</keyword>
<keyword id="KW-0025">Alternative splicing</keyword>
<keyword id="KW-0053">Apoptosis</keyword>
<keyword id="KW-0903">Direct protein sequencing</keyword>
<keyword id="KW-1015">Disulfide bond</keyword>
<keyword id="KW-0325">Glycoprotein</keyword>
<keyword id="KW-0472">Membrane</keyword>
<keyword id="KW-1267">Proteomics identification</keyword>
<keyword id="KW-0675">Receptor</keyword>
<keyword id="KW-1185">Reference proteome</keyword>
<keyword id="KW-0677">Repeat</keyword>
<keyword id="KW-0732">Signal</keyword>
<keyword id="KW-0812">Transmembrane</keyword>
<keyword id="KW-1133">Transmembrane helix</keyword>
<name>TR10B_HUMAN</name>
<comment type="function">
    <text evidence="5 6 8">Receptor for the cytotoxic ligand TNFSF10/TRAIL (PubMed:10549288). The adapter molecule FADD recruits caspase-8 to the activated receptor. The resulting death-inducing signaling complex (DISC) performs caspase-8 proteolytic activation which initiates the subsequent cascade of caspases (aspartate-specific cysteine proteases) mediating apoptosis. Promotes the activation of NF-kappa-B. Essential for ER stress-induced apoptosis.</text>
</comment>
<comment type="subunit">
    <text evidence="6 11 12 13">Monomer (PubMed:10549288). Can interact with TRADD and RIPK1. Interacts with HCMV protein UL141; this interaction prevents TNFRSF10B cell surface expression. Two TNFRSF10B monomers interact with a UL141 homodimer. Three TNFRSF10B molecules interact with TNFSF10 homotrimer (PubMed:10549288). In the absence of stimulation, interacts with BIRC2, DDX3X and GSK3B. The interaction with BIRC2 and DDX3X is further enhanced upon receptor stimulation and accompanied by DDX3X and BIRC2 cleavage (PubMed:18846110).</text>
</comment>
<comment type="interaction">
    <interactant intactId="EBI-518882">
        <id>O14763</id>
    </interactant>
    <interactant intactId="EBI-12092171">
        <id>Q12797-6</id>
        <label>ASPH</label>
    </interactant>
    <organismsDiffer>false</organismsDiffer>
    <experiments>3</experiments>
</comment>
<comment type="interaction">
    <interactant intactId="EBI-518882">
        <id>O14763</id>
    </interactant>
    <interactant intactId="EBI-17263240">
        <id>P15941-11</id>
        <label>MUC1</label>
    </interactant>
    <organismsDiffer>false</organismsDiffer>
    <experiments>3</experiments>
</comment>
<comment type="interaction">
    <interactant intactId="EBI-518882">
        <id>O14763</id>
    </interactant>
    <interactant intactId="EBI-495373">
        <id>P50591</id>
        <label>TNFSF10</label>
    </interactant>
    <organismsDiffer>false</organismsDiffer>
    <experiments>21</experiments>
</comment>
<comment type="interaction">
    <interactant intactId="EBI-518882">
        <id>O14763</id>
    </interactant>
    <interactant intactId="EBI-12837904">
        <id>Q96MV8</id>
        <label>ZDHHC15</label>
    </interactant>
    <organismsDiffer>false</organismsDiffer>
    <experiments>6</experiments>
</comment>
<comment type="subcellular location">
    <subcellularLocation>
        <location>Membrane</location>
        <topology>Single-pass type I membrane protein</topology>
    </subcellularLocation>
</comment>
<comment type="alternative products">
    <event type="alternative splicing"/>
    <isoform>
        <id>O14763-1</id>
        <name>Long</name>
        <name>TRICK2B</name>
        <sequence type="displayed"/>
    </isoform>
    <isoform>
        <id>O14763-3</id>
        <name>3</name>
        <sequence type="described" ref="VSP_039125"/>
    </isoform>
    <isoform>
        <id>O14763-2</id>
        <name>Short</name>
        <name>TRICK2A</name>
        <sequence type="described" ref="VSP_006490"/>
    </isoform>
</comment>
<comment type="tissue specificity">
    <text>Widely expressed in adult and fetal tissues; very highly expressed in tumor cell lines such as HeLaS3, K-562, HL-60, SW480, A-549 and G-361; highly expressed in heart, peripheral blood lymphocytes, liver, pancreas, spleen, thymus, prostate, ovary, uterus, placenta, testis, esophagus, stomach and throughout the intestinal tract; not detectable in brain.</text>
</comment>
<comment type="induction">
    <text evidence="8">By ER stress. Regulated by p53/TP53.</text>
</comment>
<comment type="PTM">
    <text evidence="14">(Microbial infection) Glycosylated on Arg residue by S.typhimurium protein Ssek3.</text>
</comment>
<comment type="disease">
    <disease id="DI-01696">
        <name>Squamous cell carcinoma of the head and neck</name>
        <acronym>HNSCC</acronym>
        <description>A non-melanoma skin cancer affecting the head and neck. The hallmark of cutaneous SCC is malignant transformation of normal epidermal keratinocytes.</description>
        <dbReference type="MIM" id="275355"/>
    </disease>
    <text>The disease may be caused by variants affecting the gene represented in this entry.</text>
</comment>
<comment type="miscellaneous">
    <molecule>Isoform Long</molecule>
    <text>May be produced at very low levels due to a premature stop codon in the mRNA, leading to nonsense-mediated mRNA decay.</text>
</comment>
<comment type="miscellaneous">
    <molecule>Isoform 3</molecule>
    <text evidence="32">May be produced at very low levels due to a premature stop codon in the mRNA, leading to nonsense-mediated mRNA decay.</text>
</comment>
<comment type="miscellaneous">
    <molecule>Isoform Short</molecule>
    <text evidence="32">May be produced at very low levels due to a premature stop codon in the mRNA, leading to nonsense-mediated mRNA decay.</text>
</comment>
<sequence>MEQRGQNAPAASGARKRHGPGPREARGARPGPRVPKTLVLVVAAVLLLVSAESALITQQDLAPQQRAAPQQKRSSPSEGLCPPGHHISEDGRDCISCKYGQDYSTHWNDLLFCLRCTRCDSGEVELSPCTTTRNTVCQCEEGTFREEDSPEMCRKCRTGCPRGMVKVGDCTPWSDIECVHKESGTKHSGEVPAVEETVTSSPGTPASPCSLSGIIIGVTVAAVVLIVAVFVCKSLLWKKVLPYLKGICSGGGGDPERVDRSSQRPGAEDNVLNEIVSILQPTQVPEQEMEVQEPAEPTGVNMLSPGESEHLLEPAEAERSQRRRLLVPANEGDPTETLRQCFDDFADLVPFDSWEPLMRKLGLMDNEIKVAKAEAAGHRDTLYTMLIKWVNKTGRDASVHTLLDALETLGERLAKQKIEDHLLSSGKFMYLEGNADSAMS</sequence>
<protein>
    <recommendedName>
        <fullName>Tumor necrosis factor receptor superfamily member 10B</fullName>
    </recommendedName>
    <alternativeName>
        <fullName>Death receptor 5</fullName>
    </alternativeName>
    <alternativeName>
        <fullName>TNF-related apoptosis-inducing ligand receptor 2</fullName>
        <shortName>TRAIL receptor 2</shortName>
        <shortName>TRAIL-R2</shortName>
    </alternativeName>
    <cdAntigenName>CD262</cdAntigenName>
</protein>
<dbReference type="EMBL" id="AF018657">
    <property type="protein sequence ID" value="AAB70577.1"/>
    <property type="molecule type" value="mRNA"/>
</dbReference>
<dbReference type="EMBL" id="AF018658">
    <property type="protein sequence ID" value="AAB70578.1"/>
    <property type="molecule type" value="mRNA"/>
</dbReference>
<dbReference type="EMBL" id="AF016849">
    <property type="protein sequence ID" value="AAC51778.1"/>
    <property type="molecule type" value="mRNA"/>
</dbReference>
<dbReference type="EMBL" id="AF016266">
    <property type="protein sequence ID" value="AAB81180.1"/>
    <property type="molecule type" value="mRNA"/>
</dbReference>
<dbReference type="EMBL" id="AF016268">
    <property type="protein sequence ID" value="AAC01565.1"/>
    <property type="molecule type" value="mRNA"/>
</dbReference>
<dbReference type="EMBL" id="AF020501">
    <property type="protein sequence ID" value="AAB71412.1"/>
    <property type="molecule type" value="mRNA"/>
</dbReference>
<dbReference type="EMBL" id="AF022386">
    <property type="protein sequence ID" value="AAB71949.1"/>
    <property type="molecule type" value="mRNA"/>
</dbReference>
<dbReference type="EMBL" id="AF012628">
    <property type="protein sequence ID" value="AAB67109.1"/>
    <property type="molecule type" value="mRNA"/>
</dbReference>
<dbReference type="EMBL" id="AF012535">
    <property type="protein sequence ID" value="AAB67103.1"/>
    <property type="molecule type" value="mRNA"/>
</dbReference>
<dbReference type="EMBL" id="AB014718">
    <property type="protein sequence ID" value="BAA33723.1"/>
    <property type="molecule type" value="Genomic_DNA"/>
</dbReference>
<dbReference type="EMBL" id="AF153687">
    <property type="protein sequence ID" value="AAF75587.1"/>
    <property type="molecule type" value="mRNA"/>
</dbReference>
<dbReference type="EMBL" id="AF192548">
    <property type="protein sequence ID" value="AAF07175.1"/>
    <property type="molecule type" value="mRNA"/>
</dbReference>
<dbReference type="EMBL" id="AY358277">
    <property type="protein sequence ID" value="AAQ88644.1"/>
    <property type="molecule type" value="mRNA"/>
</dbReference>
<dbReference type="EMBL" id="BX538104">
    <property type="protein sequence ID" value="CAD98017.1"/>
    <property type="molecule type" value="mRNA"/>
</dbReference>
<dbReference type="EMBL" id="AC107959">
    <property type="status" value="NOT_ANNOTATED_CDS"/>
    <property type="molecule type" value="Genomic_DNA"/>
</dbReference>
<dbReference type="EMBL" id="BC001281">
    <property type="protein sequence ID" value="AAH01281.1"/>
    <property type="molecule type" value="mRNA"/>
</dbReference>
<dbReference type="CCDS" id="CCDS6035.1">
    <molecule id="O14763-1"/>
</dbReference>
<dbReference type="CCDS" id="CCDS6036.1">
    <molecule id="O14763-2"/>
</dbReference>
<dbReference type="RefSeq" id="NP_003833.4">
    <molecule id="O14763-1"/>
    <property type="nucleotide sequence ID" value="NM_003842.4"/>
</dbReference>
<dbReference type="RefSeq" id="NP_671716.2">
    <molecule id="O14763-2"/>
    <property type="nucleotide sequence ID" value="NM_147187.3"/>
</dbReference>
<dbReference type="PDB" id="1D0G">
    <property type="method" value="X-ray"/>
    <property type="resolution" value="2.40 A"/>
    <property type="chains" value="R/S/T=54-183"/>
</dbReference>
<dbReference type="PDB" id="1D4V">
    <property type="method" value="X-ray"/>
    <property type="resolution" value="2.20 A"/>
    <property type="chains" value="A=69-184"/>
</dbReference>
<dbReference type="PDB" id="1DU3">
    <property type="method" value="X-ray"/>
    <property type="resolution" value="2.20 A"/>
    <property type="chains" value="A/B/C/G/H/I=54-183"/>
</dbReference>
<dbReference type="PDB" id="1ZA3">
    <property type="method" value="X-ray"/>
    <property type="resolution" value="3.35 A"/>
    <property type="chains" value="R/S=54-183"/>
</dbReference>
<dbReference type="PDB" id="2H9G">
    <property type="method" value="X-ray"/>
    <property type="resolution" value="2.32 A"/>
    <property type="chains" value="R/S=54-183"/>
</dbReference>
<dbReference type="PDB" id="3X3F">
    <property type="method" value="X-ray"/>
    <property type="resolution" value="2.10 A"/>
    <property type="chains" value="A=54-184"/>
</dbReference>
<dbReference type="PDB" id="4I9X">
    <property type="method" value="X-ray"/>
    <property type="resolution" value="2.10 A"/>
    <property type="chains" value="C/D=58-184"/>
</dbReference>
<dbReference type="PDB" id="4N90">
    <property type="method" value="X-ray"/>
    <property type="resolution" value="3.30 A"/>
    <property type="chains" value="R/S/T=57-182"/>
</dbReference>
<dbReference type="PDB" id="4OD2">
    <property type="method" value="X-ray"/>
    <property type="resolution" value="3.20 A"/>
    <property type="chains" value="S=73-183"/>
</dbReference>
<dbReference type="PDB" id="6NHW">
    <property type="method" value="NMR"/>
    <property type="chains" value="A/B/C/D/E/F=208-242"/>
</dbReference>
<dbReference type="PDB" id="6NHY">
    <property type="method" value="NMR"/>
    <property type="chains" value="A/B/C=208-242"/>
</dbReference>
<dbReference type="PDB" id="6T3J">
    <property type="method" value="X-ray"/>
    <property type="resolution" value="3.05 A"/>
    <property type="chains" value="E/J=58-184"/>
</dbReference>
<dbReference type="PDB" id="8DPX">
    <property type="method" value="NMR"/>
    <property type="chains" value="A/B/C=77-184"/>
</dbReference>
<dbReference type="PDBsum" id="1D0G"/>
<dbReference type="PDBsum" id="1D4V"/>
<dbReference type="PDBsum" id="1DU3"/>
<dbReference type="PDBsum" id="1ZA3"/>
<dbReference type="PDBsum" id="2H9G"/>
<dbReference type="PDBsum" id="3X3F"/>
<dbReference type="PDBsum" id="4I9X"/>
<dbReference type="PDBsum" id="4N90"/>
<dbReference type="PDBsum" id="4OD2"/>
<dbReference type="PDBsum" id="6NHW"/>
<dbReference type="PDBsum" id="6NHY"/>
<dbReference type="PDBsum" id="6T3J"/>
<dbReference type="PDBsum" id="8DPX"/>
<dbReference type="SMR" id="O14763"/>
<dbReference type="BioGRID" id="114323">
    <property type="interactions" value="174"/>
</dbReference>
<dbReference type="CORUM" id="O14763"/>
<dbReference type="DIP" id="DIP-33566N"/>
<dbReference type="FunCoup" id="O14763">
    <property type="interactions" value="1085"/>
</dbReference>
<dbReference type="IntAct" id="O14763">
    <property type="interactions" value="102"/>
</dbReference>
<dbReference type="MINT" id="O14763"/>
<dbReference type="STRING" id="9606.ENSP00000276431"/>
<dbReference type="BindingDB" id="O14763"/>
<dbReference type="ChEMBL" id="CHEMBL1075153"/>
<dbReference type="DrugBank" id="DB17493">
    <property type="generic name" value="Bioymifi"/>
</dbReference>
<dbReference type="DrugBank" id="DB05895">
    <property type="generic name" value="HGS-TR2J"/>
</dbReference>
<dbReference type="DrugBank" id="DB06599">
    <property type="generic name" value="Lexatumumab"/>
</dbReference>
<dbReference type="GuidetoPHARMACOLOGY" id="1880"/>
<dbReference type="GlyGen" id="O14763">
    <property type="glycosylation" value="3 sites, 2 O-linked glycans (2 sites)"/>
</dbReference>
<dbReference type="iPTMnet" id="O14763"/>
<dbReference type="PhosphoSitePlus" id="O14763"/>
<dbReference type="SwissPalm" id="O14763"/>
<dbReference type="BioMuta" id="TNFRSF10B"/>
<dbReference type="jPOST" id="O14763"/>
<dbReference type="MassIVE" id="O14763"/>
<dbReference type="PaxDb" id="9606-ENSP00000276431"/>
<dbReference type="PeptideAtlas" id="O14763"/>
<dbReference type="ProteomicsDB" id="48210">
    <molecule id="O14763-1"/>
</dbReference>
<dbReference type="ProteomicsDB" id="48211">
    <molecule id="O14763-2"/>
</dbReference>
<dbReference type="ProteomicsDB" id="48212">
    <molecule id="O14763-3"/>
</dbReference>
<dbReference type="Pumba" id="O14763"/>
<dbReference type="ABCD" id="O14763">
    <property type="antibodies" value="53 sequenced antibodies"/>
</dbReference>
<dbReference type="Antibodypedia" id="9665">
    <property type="antibodies" value="1422 antibodies from 49 providers"/>
</dbReference>
<dbReference type="DNASU" id="8795"/>
<dbReference type="Ensembl" id="ENST00000276431.9">
    <molecule id="O14763-1"/>
    <property type="protein sequence ID" value="ENSP00000276431.4"/>
    <property type="gene ID" value="ENSG00000120889.13"/>
</dbReference>
<dbReference type="Ensembl" id="ENST00000347739.3">
    <molecule id="O14763-2"/>
    <property type="protein sequence ID" value="ENSP00000317859.3"/>
    <property type="gene ID" value="ENSG00000120889.13"/>
</dbReference>
<dbReference type="GeneID" id="8795"/>
<dbReference type="KEGG" id="hsa:8795"/>
<dbReference type="MANE-Select" id="ENST00000276431.9">
    <property type="protein sequence ID" value="ENSP00000276431.4"/>
    <property type="RefSeq nucleotide sequence ID" value="NM_003842.5"/>
    <property type="RefSeq protein sequence ID" value="NP_003833.4"/>
</dbReference>
<dbReference type="UCSC" id="uc003xct.4">
    <molecule id="O14763-1"/>
    <property type="organism name" value="human"/>
</dbReference>
<dbReference type="AGR" id="HGNC:11905"/>
<dbReference type="CTD" id="8795"/>
<dbReference type="DisGeNET" id="8795"/>
<dbReference type="GeneCards" id="TNFRSF10B"/>
<dbReference type="HGNC" id="HGNC:11905">
    <property type="gene designation" value="TNFRSF10B"/>
</dbReference>
<dbReference type="HPA" id="ENSG00000120889">
    <property type="expression patterns" value="Low tissue specificity"/>
</dbReference>
<dbReference type="MalaCards" id="TNFRSF10B"/>
<dbReference type="MIM" id="275355">
    <property type="type" value="phenotype"/>
</dbReference>
<dbReference type="MIM" id="603612">
    <property type="type" value="gene"/>
</dbReference>
<dbReference type="neXtProt" id="NX_O14763"/>
<dbReference type="OpenTargets" id="ENSG00000120889"/>
<dbReference type="Orphanet" id="494547">
    <property type="disease" value="Squamous cell carcinoma of the hypopharynx"/>
</dbReference>
<dbReference type="Orphanet" id="494550">
    <property type="disease" value="Squamous cell carcinoma of the larynx"/>
</dbReference>
<dbReference type="Orphanet" id="502366">
    <property type="disease" value="Squamous cell carcinoma of the lip"/>
</dbReference>
<dbReference type="Orphanet" id="500464">
    <property type="disease" value="Squamous cell carcinoma of the nasal cavity and paranasal sinuses"/>
</dbReference>
<dbReference type="Orphanet" id="502363">
    <property type="disease" value="Squamous cell carcinoma of the oral cavity"/>
</dbReference>
<dbReference type="Orphanet" id="500478">
    <property type="disease" value="Squamous cell carcinoma of the oropharynx"/>
</dbReference>
<dbReference type="PharmGKB" id="PA36598"/>
<dbReference type="VEuPathDB" id="HostDB:ENSG00000120889"/>
<dbReference type="eggNOG" id="ENOG502RBEC">
    <property type="taxonomic scope" value="Eukaryota"/>
</dbReference>
<dbReference type="GeneTree" id="ENSGT00940000164765"/>
<dbReference type="HOGENOM" id="CLU_038161_1_0_1"/>
<dbReference type="InParanoid" id="O14763"/>
<dbReference type="OMA" id="CQNGQDY"/>
<dbReference type="OrthoDB" id="9417953at2759"/>
<dbReference type="PAN-GO" id="O14763">
    <property type="GO annotations" value="4 GO annotations based on evolutionary models"/>
</dbReference>
<dbReference type="PhylomeDB" id="O14763"/>
<dbReference type="TreeFam" id="TF333916"/>
<dbReference type="PathwayCommons" id="O14763"/>
<dbReference type="Reactome" id="R-HSA-140534">
    <property type="pathway name" value="Caspase activation via Death Receptors in the presence of ligand"/>
</dbReference>
<dbReference type="Reactome" id="R-HSA-202733">
    <property type="pathway name" value="Cell surface interactions at the vascular wall"/>
</dbReference>
<dbReference type="Reactome" id="R-HSA-3371378">
    <property type="pathway name" value="Regulation by c-FLIP"/>
</dbReference>
<dbReference type="Reactome" id="R-HSA-5213460">
    <property type="pathway name" value="RIPK1-mediated regulated necrosis"/>
</dbReference>
<dbReference type="Reactome" id="R-HSA-5218900">
    <property type="pathway name" value="CASP8 activity is inhibited"/>
</dbReference>
<dbReference type="Reactome" id="R-HSA-6803211">
    <property type="pathway name" value="TP53 Regulates Transcription of Death Receptors and Ligands"/>
</dbReference>
<dbReference type="Reactome" id="R-HSA-69416">
    <property type="pathway name" value="Dimerization of procaspase-8"/>
</dbReference>
<dbReference type="Reactome" id="R-HSA-75158">
    <property type="pathway name" value="TRAIL signaling"/>
</dbReference>
<dbReference type="SignaLink" id="O14763"/>
<dbReference type="SIGNOR" id="O14763"/>
<dbReference type="BioGRID-ORCS" id="8795">
    <property type="hits" value="20 hits in 1169 CRISPR screens"/>
</dbReference>
<dbReference type="ChiTaRS" id="TNFRSF10B">
    <property type="organism name" value="human"/>
</dbReference>
<dbReference type="EvolutionaryTrace" id="O14763"/>
<dbReference type="GeneWiki" id="TNFRSF10B"/>
<dbReference type="GenomeRNAi" id="8795"/>
<dbReference type="Pharos" id="O14763">
    <property type="development level" value="Tbio"/>
</dbReference>
<dbReference type="PRO" id="PR:O14763"/>
<dbReference type="Proteomes" id="UP000005640">
    <property type="component" value="Chromosome 8"/>
</dbReference>
<dbReference type="RNAct" id="O14763">
    <property type="molecule type" value="protein"/>
</dbReference>
<dbReference type="Bgee" id="ENSG00000120889">
    <property type="expression patterns" value="Expressed in cartilage tissue and 198 other cell types or tissues"/>
</dbReference>
<dbReference type="ExpressionAtlas" id="O14763">
    <property type="expression patterns" value="baseline and differential"/>
</dbReference>
<dbReference type="GO" id="GO:0009986">
    <property type="term" value="C:cell surface"/>
    <property type="evidence" value="ECO:0000314"/>
    <property type="project" value="UniProtKB"/>
</dbReference>
<dbReference type="GO" id="GO:0005886">
    <property type="term" value="C:plasma membrane"/>
    <property type="evidence" value="ECO:0000314"/>
    <property type="project" value="UniProt"/>
</dbReference>
<dbReference type="GO" id="GO:0038023">
    <property type="term" value="F:signaling receptor activity"/>
    <property type="evidence" value="ECO:0000303"/>
    <property type="project" value="UniProtKB"/>
</dbReference>
<dbReference type="GO" id="GO:0045569">
    <property type="term" value="F:TRAIL binding"/>
    <property type="evidence" value="ECO:0000303"/>
    <property type="project" value="UniProtKB"/>
</dbReference>
<dbReference type="GO" id="GO:0036463">
    <property type="term" value="F:TRAIL receptor activity"/>
    <property type="evidence" value="ECO:0000314"/>
    <property type="project" value="ARUK-UCL"/>
</dbReference>
<dbReference type="GO" id="GO:0007250">
    <property type="term" value="P:activation of NF-kappaB-inducing kinase activity"/>
    <property type="evidence" value="ECO:0000303"/>
    <property type="project" value="UniProtKB"/>
</dbReference>
<dbReference type="GO" id="GO:0006915">
    <property type="term" value="P:apoptotic process"/>
    <property type="evidence" value="ECO:0000303"/>
    <property type="project" value="UniProtKB"/>
</dbReference>
<dbReference type="GO" id="GO:0007166">
    <property type="term" value="P:cell surface receptor signaling pathway"/>
    <property type="evidence" value="ECO:0000304"/>
    <property type="project" value="ProtInc"/>
</dbReference>
<dbReference type="GO" id="GO:0071260">
    <property type="term" value="P:cellular response to mechanical stimulus"/>
    <property type="evidence" value="ECO:0000270"/>
    <property type="project" value="UniProtKB"/>
</dbReference>
<dbReference type="GO" id="GO:0002357">
    <property type="term" value="P:defense response to tumor cell"/>
    <property type="evidence" value="ECO:0000314"/>
    <property type="project" value="ARUK-UCL"/>
</dbReference>
<dbReference type="GO" id="GO:0008625">
    <property type="term" value="P:extrinsic apoptotic signaling pathway via death domain receptors"/>
    <property type="evidence" value="ECO:0000303"/>
    <property type="project" value="UniProtKB"/>
</dbReference>
<dbReference type="GO" id="GO:0070059">
    <property type="term" value="P:intrinsic apoptotic signaling pathway in response to endoplasmic reticulum stress"/>
    <property type="evidence" value="ECO:0000315"/>
    <property type="project" value="UniProtKB"/>
</dbReference>
<dbReference type="GO" id="GO:0043065">
    <property type="term" value="P:positive regulation of apoptotic process"/>
    <property type="evidence" value="ECO:0000318"/>
    <property type="project" value="GO_Central"/>
</dbReference>
<dbReference type="GO" id="GO:0043123">
    <property type="term" value="P:positive regulation of canonical NF-kappaB signal transduction"/>
    <property type="evidence" value="ECO:0000270"/>
    <property type="project" value="UniProtKB"/>
</dbReference>
<dbReference type="GO" id="GO:0042981">
    <property type="term" value="P:regulation of apoptotic process"/>
    <property type="evidence" value="ECO:0000303"/>
    <property type="project" value="UniProtKB"/>
</dbReference>
<dbReference type="GO" id="GO:0034976">
    <property type="term" value="P:response to endoplasmic reticulum stress"/>
    <property type="evidence" value="ECO:0000314"/>
    <property type="project" value="UniProtKB"/>
</dbReference>
<dbReference type="GO" id="GO:0036462">
    <property type="term" value="P:TRAIL-activated apoptotic signaling pathway"/>
    <property type="evidence" value="ECO:0000315"/>
    <property type="project" value="UniProt"/>
</dbReference>
<dbReference type="CDD" id="cd08315">
    <property type="entry name" value="Death_TRAILR_DR4_DR5"/>
    <property type="match status" value="1"/>
</dbReference>
<dbReference type="CDD" id="cd10580">
    <property type="entry name" value="TNFRSF10"/>
    <property type="match status" value="1"/>
</dbReference>
<dbReference type="FunFam" id="1.10.533.10:FF:000043">
    <property type="entry name" value="Tumor necrosis factor receptor superfamily member 10A"/>
    <property type="match status" value="1"/>
</dbReference>
<dbReference type="FunFam" id="2.10.50.10:FF:000016">
    <property type="entry name" value="Tumor necrosis factor receptor superfamily member 10B"/>
    <property type="match status" value="1"/>
</dbReference>
<dbReference type="FunFam" id="2.10.50.10:FF:000004">
    <property type="entry name" value="Tumor necrosis factor receptor superfamily member 6"/>
    <property type="match status" value="1"/>
</dbReference>
<dbReference type="Gene3D" id="1.10.533.10">
    <property type="entry name" value="Death Domain, Fas"/>
    <property type="match status" value="1"/>
</dbReference>
<dbReference type="Gene3D" id="2.10.50.10">
    <property type="entry name" value="Tumor Necrosis Factor Receptor, subunit A, domain 2"/>
    <property type="match status" value="3"/>
</dbReference>
<dbReference type="InterPro" id="IPR011029">
    <property type="entry name" value="DEATH-like_dom_sf"/>
</dbReference>
<dbReference type="InterPro" id="IPR000488">
    <property type="entry name" value="Death_dom"/>
</dbReference>
<dbReference type="InterPro" id="IPR001368">
    <property type="entry name" value="TNFR/NGFR_Cys_rich_reg"/>
</dbReference>
<dbReference type="InterPro" id="IPR020465">
    <property type="entry name" value="TNFR_10"/>
</dbReference>
<dbReference type="InterPro" id="IPR052491">
    <property type="entry name" value="TNFRSF10"/>
</dbReference>
<dbReference type="InterPro" id="IPR034024">
    <property type="entry name" value="TNFRSF10_N"/>
</dbReference>
<dbReference type="InterPro" id="IPR034029">
    <property type="entry name" value="TNFRSF10A/B_death"/>
</dbReference>
<dbReference type="PANTHER" id="PTHR46330">
    <property type="entry name" value="TUMOR NECROSIS FACTOR RECEPTOR SUPERFAMILY MEMBER 10B"/>
    <property type="match status" value="1"/>
</dbReference>
<dbReference type="PANTHER" id="PTHR46330:SF1">
    <property type="entry name" value="TUMOR NECROSIS FACTOR RECEPTOR SUPERFAMILY MEMBER 10B"/>
    <property type="match status" value="1"/>
</dbReference>
<dbReference type="Pfam" id="PF00531">
    <property type="entry name" value="Death"/>
    <property type="match status" value="1"/>
</dbReference>
<dbReference type="Pfam" id="PF00020">
    <property type="entry name" value="TNFR_c6"/>
    <property type="match status" value="2"/>
</dbReference>
<dbReference type="PIRSF" id="PIRSF037867">
    <property type="entry name" value="CD261_antigen"/>
    <property type="match status" value="1"/>
</dbReference>
<dbReference type="PRINTS" id="PR01956">
    <property type="entry name" value="TNFACTORR10"/>
</dbReference>
<dbReference type="SMART" id="SM00005">
    <property type="entry name" value="DEATH"/>
    <property type="match status" value="1"/>
</dbReference>
<dbReference type="SMART" id="SM00208">
    <property type="entry name" value="TNFR"/>
    <property type="match status" value="2"/>
</dbReference>
<dbReference type="SUPFAM" id="SSF47986">
    <property type="entry name" value="DEATH domain"/>
    <property type="match status" value="1"/>
</dbReference>
<dbReference type="SUPFAM" id="SSF57586">
    <property type="entry name" value="TNF receptor-like"/>
    <property type="match status" value="3"/>
</dbReference>
<dbReference type="PROSITE" id="PS50017">
    <property type="entry name" value="DEATH_DOMAIN"/>
    <property type="match status" value="1"/>
</dbReference>
<dbReference type="PROSITE" id="PS00652">
    <property type="entry name" value="TNFR_NGFR_1"/>
    <property type="match status" value="2"/>
</dbReference>
<dbReference type="PROSITE" id="PS50050">
    <property type="entry name" value="TNFR_NGFR_2"/>
    <property type="match status" value="2"/>
</dbReference>
<feature type="signal peptide" evidence="17">
    <location>
        <begin position="1"/>
        <end position="55"/>
    </location>
</feature>
<feature type="chain" id="PRO_0000034580" description="Tumor necrosis factor receptor superfamily member 10B">
    <location>
        <begin position="56"/>
        <end position="440"/>
    </location>
</feature>
<feature type="topological domain" description="Extracellular" evidence="1">
    <location>
        <begin position="56"/>
        <end position="210"/>
    </location>
</feature>
<feature type="transmembrane region" description="Helical" evidence="1">
    <location>
        <begin position="211"/>
        <end position="231"/>
    </location>
</feature>
<feature type="topological domain" description="Cytoplasmic" evidence="1">
    <location>
        <begin position="232"/>
        <end position="440"/>
    </location>
</feature>
<feature type="repeat" description="TNFR-Cys 1">
    <location>
        <begin position="57"/>
        <end position="94"/>
    </location>
</feature>
<feature type="repeat" description="TNFR-Cys 2">
    <location>
        <begin position="97"/>
        <end position="137"/>
    </location>
</feature>
<feature type="repeat" description="TNFR-Cys 3">
    <location>
        <begin position="138"/>
        <end position="178"/>
    </location>
</feature>
<feature type="repeat" description="TAPE">
    <location>
        <begin position="192"/>
        <end position="206"/>
    </location>
</feature>
<feature type="domain" description="Death" evidence="2">
    <location>
        <begin position="339"/>
        <end position="422"/>
    </location>
</feature>
<feature type="region of interest" description="Disordered" evidence="3">
    <location>
        <begin position="1"/>
        <end position="32"/>
    </location>
</feature>
<feature type="region of interest" description="Disordered" evidence="3">
    <location>
        <begin position="60"/>
        <end position="84"/>
    </location>
</feature>
<feature type="compositionally biased region" description="Low complexity" evidence="3">
    <location>
        <begin position="60"/>
        <end position="71"/>
    </location>
</feature>
<feature type="disulfide bond" evidence="5 6 13 33 34 35">
    <location>
        <begin position="81"/>
        <end position="94"/>
    </location>
</feature>
<feature type="disulfide bond" evidence="5 6 13 33 34 35">
    <location>
        <begin position="97"/>
        <end position="113"/>
    </location>
</feature>
<feature type="disulfide bond" evidence="5 6 13 33 34 35">
    <location>
        <begin position="116"/>
        <end position="129"/>
    </location>
</feature>
<feature type="disulfide bond" evidence="5 6 13 33 34 35">
    <location>
        <begin position="119"/>
        <end position="137"/>
    </location>
</feature>
<feature type="disulfide bond" evidence="5 6 13 33 34 35 36">
    <location>
        <begin position="139"/>
        <end position="153"/>
    </location>
</feature>
<feature type="disulfide bond" evidence="5 6 13 33 34 35">
    <location>
        <begin position="156"/>
        <end position="170"/>
    </location>
</feature>
<feature type="disulfide bond" evidence="5 6 13 33 34 35">
    <location>
        <begin position="160"/>
        <end position="178"/>
    </location>
</feature>
<feature type="splice variant" id="VSP_039125" description="In isoform 3." evidence="23">
    <location>
        <begin position="119"/>
        <end position="440"/>
    </location>
</feature>
<feature type="splice variant" id="VSP_006490" description="In isoform Short." evidence="22 24 25 26 27 28 29 30 31">
    <location>
        <begin position="185"/>
        <end position="213"/>
    </location>
</feature>
<feature type="sequence variant" id="VAR_016153" description="In dbSNP:rs1129424." evidence="4 7 9 10 15 16 18 19 20 21">
    <original>P</original>
    <variation>L</variation>
    <location>
        <position position="32"/>
    </location>
</feature>
<feature type="sequence variant" id="VAR_016154" description="In dbSNP:rs1047266." evidence="4 16 18 19 20 21">
    <original>A</original>
    <variation>V</variation>
    <location>
        <position position="67"/>
    </location>
</feature>
<feature type="sequence variant" id="VAR_059831" description="In dbSNP:rs13265018." evidence="4 9 16 17 19">
    <original>V</original>
    <variation>A</variation>
    <location>
        <position position="191"/>
    </location>
</feature>
<feature type="sequence conflict" description="In Ref. 8; AAB67103 and 12; AAQ88644." evidence="32" ref="8 12">
    <original>M</original>
    <variation>L</variation>
    <location>
        <position position="439"/>
    </location>
</feature>
<feature type="strand" evidence="37">
    <location>
        <begin position="77"/>
        <end position="79"/>
    </location>
</feature>
<feature type="strand" evidence="39">
    <location>
        <begin position="85"/>
        <end position="87"/>
    </location>
</feature>
<feature type="strand" evidence="37">
    <location>
        <begin position="89"/>
        <end position="91"/>
    </location>
</feature>
<feature type="strand" evidence="39">
    <location>
        <begin position="94"/>
        <end position="96"/>
    </location>
</feature>
<feature type="turn" evidence="39">
    <location>
        <begin position="99"/>
        <end position="101"/>
    </location>
</feature>
<feature type="strand" evidence="39">
    <location>
        <begin position="106"/>
        <end position="108"/>
    </location>
</feature>
<feature type="strand" evidence="39">
    <location>
        <begin position="110"/>
        <end position="112"/>
    </location>
</feature>
<feature type="strand" evidence="39">
    <location>
        <begin position="123"/>
        <end position="127"/>
    </location>
</feature>
<feature type="strand" evidence="37">
    <location>
        <begin position="131"/>
        <end position="133"/>
    </location>
</feature>
<feature type="strand" evidence="39">
    <location>
        <begin position="136"/>
        <end position="142"/>
    </location>
</feature>
<feature type="strand" evidence="40">
    <location>
        <begin position="143"/>
        <end position="145"/>
    </location>
</feature>
<feature type="strand" evidence="43">
    <location>
        <begin position="149"/>
        <end position="151"/>
    </location>
</feature>
<feature type="strand" evidence="40">
    <location>
        <begin position="153"/>
        <end position="155"/>
    </location>
</feature>
<feature type="strand" evidence="40">
    <location>
        <begin position="164"/>
        <end position="166"/>
    </location>
</feature>
<feature type="strand" evidence="38">
    <location>
        <begin position="172"/>
        <end position="174"/>
    </location>
</feature>
<feature type="strand" evidence="40">
    <location>
        <begin position="178"/>
        <end position="180"/>
    </location>
</feature>
<feature type="helix" evidence="41">
    <location>
        <begin position="211"/>
        <end position="213"/>
    </location>
</feature>
<feature type="helix" evidence="41">
    <location>
        <begin position="214"/>
        <end position="236"/>
    </location>
</feature>
<feature type="strand" evidence="42">
    <location>
        <begin position="237"/>
        <end position="240"/>
    </location>
</feature>